<reference key="1">
    <citation type="journal article" date="2004" name="Science">
        <title>Illuminating the evolutionary history of chlamydiae.</title>
        <authorList>
            <person name="Horn M."/>
            <person name="Collingro A."/>
            <person name="Schmitz-Esser S."/>
            <person name="Beier C.L."/>
            <person name="Purkhold U."/>
            <person name="Fartmann B."/>
            <person name="Brandt P."/>
            <person name="Nyakatura G.J."/>
            <person name="Droege M."/>
            <person name="Frishman D."/>
            <person name="Rattei T."/>
            <person name="Mewes H.-W."/>
            <person name="Wagner M."/>
        </authorList>
    </citation>
    <scope>NUCLEOTIDE SEQUENCE [LARGE SCALE GENOMIC DNA]</scope>
    <source>
        <strain>UWE25</strain>
    </source>
</reference>
<comment type="function">
    <text evidence="1">Part of the ABC transporter complex LolCDE involved in the translocation of mature outer membrane-directed lipoproteins, from the inner membrane to the periplasmic chaperone, LolA. Responsible for the formation of the LolA-lipoprotein complex in an ATP-dependent manner.</text>
</comment>
<comment type="subunit">
    <text evidence="1">The complex is composed of two ATP-binding proteins (LolD) and two transmembrane proteins (LolC and LolE).</text>
</comment>
<comment type="subcellular location">
    <subcellularLocation>
        <location evidence="1">Cell inner membrane</location>
        <topology evidence="1">Peripheral membrane protein</topology>
    </subcellularLocation>
</comment>
<comment type="similarity">
    <text evidence="1">Belongs to the ABC transporter superfamily. Lipoprotein translocase (TC 3.A.1.125) family.</text>
</comment>
<gene>
    <name evidence="1" type="primary">lolD</name>
    <name type="ordered locus">pc0815</name>
</gene>
<organism>
    <name type="scientific">Protochlamydia amoebophila (strain UWE25)</name>
    <dbReference type="NCBI Taxonomy" id="264201"/>
    <lineage>
        <taxon>Bacteria</taxon>
        <taxon>Pseudomonadati</taxon>
        <taxon>Chlamydiota</taxon>
        <taxon>Chlamydiia</taxon>
        <taxon>Parachlamydiales</taxon>
        <taxon>Parachlamydiaceae</taxon>
        <taxon>Candidatus Protochlamydia</taxon>
    </lineage>
</organism>
<evidence type="ECO:0000255" key="1">
    <source>
        <dbReference type="HAMAP-Rule" id="MF_01708"/>
    </source>
</evidence>
<keyword id="KW-0067">ATP-binding</keyword>
<keyword id="KW-0997">Cell inner membrane</keyword>
<keyword id="KW-1003">Cell membrane</keyword>
<keyword id="KW-0472">Membrane</keyword>
<keyword id="KW-0547">Nucleotide-binding</keyword>
<keyword id="KW-1185">Reference proteome</keyword>
<keyword id="KW-1278">Translocase</keyword>
<keyword id="KW-0813">Transport</keyword>
<feature type="chain" id="PRO_0000272121" description="Lipoprotein-releasing system ATP-binding protein LolD">
    <location>
        <begin position="1"/>
        <end position="228"/>
    </location>
</feature>
<feature type="domain" description="ABC transporter" evidence="1">
    <location>
        <begin position="9"/>
        <end position="228"/>
    </location>
</feature>
<feature type="binding site" evidence="1">
    <location>
        <begin position="44"/>
        <end position="51"/>
    </location>
    <ligand>
        <name>ATP</name>
        <dbReference type="ChEBI" id="CHEBI:30616"/>
    </ligand>
</feature>
<name>LOLD_PARUW</name>
<dbReference type="EC" id="7.6.2.-" evidence="1"/>
<dbReference type="EMBL" id="BX908798">
    <property type="protein sequence ID" value="CAF23539.1"/>
    <property type="molecule type" value="Genomic_DNA"/>
</dbReference>
<dbReference type="RefSeq" id="WP_011175365.1">
    <property type="nucleotide sequence ID" value="NC_005861.2"/>
</dbReference>
<dbReference type="SMR" id="Q6MD10"/>
<dbReference type="STRING" id="264201.pc0815"/>
<dbReference type="KEGG" id="pcu:PC_RS03915"/>
<dbReference type="eggNOG" id="COG1136">
    <property type="taxonomic scope" value="Bacteria"/>
</dbReference>
<dbReference type="HOGENOM" id="CLU_000604_1_22_0"/>
<dbReference type="OrthoDB" id="9791546at2"/>
<dbReference type="Proteomes" id="UP000000529">
    <property type="component" value="Chromosome"/>
</dbReference>
<dbReference type="GO" id="GO:0005886">
    <property type="term" value="C:plasma membrane"/>
    <property type="evidence" value="ECO:0007669"/>
    <property type="project" value="UniProtKB-SubCell"/>
</dbReference>
<dbReference type="GO" id="GO:0005524">
    <property type="term" value="F:ATP binding"/>
    <property type="evidence" value="ECO:0007669"/>
    <property type="project" value="UniProtKB-KW"/>
</dbReference>
<dbReference type="GO" id="GO:0016887">
    <property type="term" value="F:ATP hydrolysis activity"/>
    <property type="evidence" value="ECO:0007669"/>
    <property type="project" value="InterPro"/>
</dbReference>
<dbReference type="GO" id="GO:0022857">
    <property type="term" value="F:transmembrane transporter activity"/>
    <property type="evidence" value="ECO:0007669"/>
    <property type="project" value="TreeGrafter"/>
</dbReference>
<dbReference type="CDD" id="cd03255">
    <property type="entry name" value="ABC_MJ0796_LolCDE_FtsE"/>
    <property type="match status" value="1"/>
</dbReference>
<dbReference type="Gene3D" id="3.40.50.300">
    <property type="entry name" value="P-loop containing nucleotide triphosphate hydrolases"/>
    <property type="match status" value="1"/>
</dbReference>
<dbReference type="InterPro" id="IPR003593">
    <property type="entry name" value="AAA+_ATPase"/>
</dbReference>
<dbReference type="InterPro" id="IPR003439">
    <property type="entry name" value="ABC_transporter-like_ATP-bd"/>
</dbReference>
<dbReference type="InterPro" id="IPR017871">
    <property type="entry name" value="ABC_transporter-like_CS"/>
</dbReference>
<dbReference type="InterPro" id="IPR015854">
    <property type="entry name" value="ABC_transpr_LolD-like"/>
</dbReference>
<dbReference type="InterPro" id="IPR017911">
    <property type="entry name" value="MacB-like_ATP-bd"/>
</dbReference>
<dbReference type="InterPro" id="IPR027417">
    <property type="entry name" value="P-loop_NTPase"/>
</dbReference>
<dbReference type="PANTHER" id="PTHR24220">
    <property type="entry name" value="IMPORT ATP-BINDING PROTEIN"/>
    <property type="match status" value="1"/>
</dbReference>
<dbReference type="PANTHER" id="PTHR24220:SF689">
    <property type="entry name" value="LIPOPROTEIN-RELEASING SYSTEM ATP-BINDING PROTEIN LOLD"/>
    <property type="match status" value="1"/>
</dbReference>
<dbReference type="Pfam" id="PF00005">
    <property type="entry name" value="ABC_tran"/>
    <property type="match status" value="1"/>
</dbReference>
<dbReference type="SMART" id="SM00382">
    <property type="entry name" value="AAA"/>
    <property type="match status" value="1"/>
</dbReference>
<dbReference type="SUPFAM" id="SSF52540">
    <property type="entry name" value="P-loop containing nucleoside triphosphate hydrolases"/>
    <property type="match status" value="1"/>
</dbReference>
<dbReference type="PROSITE" id="PS00211">
    <property type="entry name" value="ABC_TRANSPORTER_1"/>
    <property type="match status" value="1"/>
</dbReference>
<dbReference type="PROSITE" id="PS50893">
    <property type="entry name" value="ABC_TRANSPORTER_2"/>
    <property type="match status" value="1"/>
</dbReference>
<dbReference type="PROSITE" id="PS51244">
    <property type="entry name" value="LOLD"/>
    <property type="match status" value="1"/>
</dbReference>
<proteinExistence type="inferred from homology"/>
<protein>
    <recommendedName>
        <fullName evidence="1">Lipoprotein-releasing system ATP-binding protein LolD</fullName>
        <ecNumber evidence="1">7.6.2.-</ecNumber>
    </recommendedName>
</protein>
<sequence length="228" mass="25484">MHSHSTLILEAHDIQKNFYHPVQVKILQSVSLQVQMGESVAIIGRSGEGKSTLLQILGTLEQPCSGTLTIDNQLISSSNKSQIRNELIGFVFQSFHLLEDYTALENVLMPARIGRKSVAKGSLTEQRGMELLHQVGLQERAHFHTKLLSGGEKQRIALARAMCNDPKIIFADEPSGNLDRQTAHLMHEILLKFIHGQQKALVLVTHDPELAKLCSSQYELINGCLYRR</sequence>
<accession>Q6MD10</accession>